<protein>
    <recommendedName>
        <fullName>Probable cyclic nucleotide-gated ion channel 6</fullName>
        <shortName>AtCNGC6</shortName>
    </recommendedName>
    <alternativeName>
        <fullName>Cyclic nucleotide- and calmodulin-regulated ion channel 6</fullName>
    </alternativeName>
</protein>
<proteinExistence type="evidence at protein level"/>
<name>CNGC6_ARATH</name>
<organism>
    <name type="scientific">Arabidopsis thaliana</name>
    <name type="common">Mouse-ear cress</name>
    <dbReference type="NCBI Taxonomy" id="3702"/>
    <lineage>
        <taxon>Eukaryota</taxon>
        <taxon>Viridiplantae</taxon>
        <taxon>Streptophyta</taxon>
        <taxon>Embryophyta</taxon>
        <taxon>Tracheophyta</taxon>
        <taxon>Spermatophyta</taxon>
        <taxon>Magnoliopsida</taxon>
        <taxon>eudicotyledons</taxon>
        <taxon>Gunneridae</taxon>
        <taxon>Pentapetalae</taxon>
        <taxon>rosids</taxon>
        <taxon>malvids</taxon>
        <taxon>Brassicales</taxon>
        <taxon>Brassicaceae</taxon>
        <taxon>Camelineae</taxon>
        <taxon>Arabidopsis</taxon>
    </lineage>
</organism>
<feature type="chain" id="PRO_0000219334" description="Probable cyclic nucleotide-gated ion channel 6">
    <location>
        <begin position="1"/>
        <end position="747"/>
    </location>
</feature>
<feature type="topological domain" description="Cytoplasmic" evidence="2">
    <location>
        <begin position="1"/>
        <end position="117"/>
    </location>
</feature>
<feature type="transmembrane region" description="Helical; Name=H1" evidence="2">
    <location>
        <begin position="118"/>
        <end position="138"/>
    </location>
</feature>
<feature type="topological domain" description="Extracellular" evidence="2">
    <location>
        <begin position="139"/>
        <end position="150"/>
    </location>
</feature>
<feature type="transmembrane region" description="Helical; Name=H2" evidence="2">
    <location>
        <begin position="151"/>
        <end position="171"/>
    </location>
</feature>
<feature type="topological domain" description="Cytoplasmic" evidence="2">
    <location>
        <begin position="172"/>
        <end position="205"/>
    </location>
</feature>
<feature type="transmembrane region" description="Helical; Name=H3" evidence="2">
    <location>
        <begin position="206"/>
        <end position="226"/>
    </location>
</feature>
<feature type="topological domain" description="Extracellular" evidence="2">
    <location>
        <begin position="227"/>
        <end position="239"/>
    </location>
</feature>
<feature type="transmembrane region" description="Helical; Name=H4" evidence="2">
    <location>
        <begin position="240"/>
        <end position="260"/>
    </location>
</feature>
<feature type="topological domain" description="Cytoplasmic" evidence="2">
    <location>
        <begin position="261"/>
        <end position="280"/>
    </location>
</feature>
<feature type="transmembrane region" description="Helical; Name=H5" evidence="2">
    <location>
        <begin position="281"/>
        <end position="301"/>
    </location>
</feature>
<feature type="topological domain" description="Extracellular" evidence="2">
    <location>
        <begin position="302"/>
        <end position="407"/>
    </location>
</feature>
<feature type="transmembrane region" description="Helical; Name=H6" evidence="2">
    <location>
        <begin position="408"/>
        <end position="428"/>
    </location>
</feature>
<feature type="topological domain" description="Cytoplasmic" evidence="2">
    <location>
        <begin position="429"/>
        <end position="747"/>
    </location>
</feature>
<feature type="domain" description="IQ" evidence="3">
    <location>
        <begin position="650"/>
        <end position="679"/>
    </location>
</feature>
<feature type="region of interest" description="Calmodulin-binding" evidence="1">
    <location>
        <begin position="630"/>
        <end position="645"/>
    </location>
</feature>
<feature type="binding site">
    <location>
        <begin position="514"/>
        <end position="638"/>
    </location>
    <ligand>
        <name>a nucleoside 3',5'-cyclic phosphate</name>
        <dbReference type="ChEBI" id="CHEBI:58464"/>
    </ligand>
</feature>
<feature type="binding site" evidence="1">
    <location>
        <position position="585"/>
    </location>
    <ligand>
        <name>a nucleoside 3',5'-cyclic phosphate</name>
        <dbReference type="ChEBI" id="CHEBI:58464"/>
    </ligand>
</feature>
<feature type="helix" evidence="5">
    <location>
        <begin position="514"/>
        <end position="516"/>
    </location>
</feature>
<feature type="helix" evidence="5">
    <location>
        <begin position="520"/>
        <end position="529"/>
    </location>
</feature>
<feature type="strand" evidence="5">
    <location>
        <begin position="539"/>
        <end position="542"/>
    </location>
</feature>
<feature type="strand" evidence="5">
    <location>
        <begin position="549"/>
        <end position="556"/>
    </location>
</feature>
<feature type="strand" evidence="5">
    <location>
        <begin position="560"/>
        <end position="562"/>
    </location>
</feature>
<feature type="strand" evidence="5">
    <location>
        <begin position="568"/>
        <end position="572"/>
    </location>
</feature>
<feature type="strand" evidence="5">
    <location>
        <begin position="574"/>
        <end position="576"/>
    </location>
</feature>
<feature type="strand" evidence="5">
    <location>
        <begin position="582"/>
        <end position="584"/>
    </location>
</feature>
<feature type="helix" evidence="5">
    <location>
        <begin position="586"/>
        <end position="592"/>
    </location>
</feature>
<feature type="strand" evidence="5">
    <location>
        <begin position="598"/>
        <end position="600"/>
    </location>
</feature>
<feature type="strand" evidence="5">
    <location>
        <begin position="604"/>
        <end position="611"/>
    </location>
</feature>
<feature type="strand" evidence="5">
    <location>
        <begin position="613"/>
        <end position="619"/>
    </location>
</feature>
<feature type="helix" evidence="5">
    <location>
        <begin position="620"/>
        <end position="630"/>
    </location>
</feature>
<accession>O82226</accession>
<accession>Q9XFS4</accession>
<comment type="function">
    <text>Probable cyclic nucleotide-gated ion channel.</text>
</comment>
<comment type="subunit">
    <text evidence="4">Homotetramer or heterotetramer.</text>
</comment>
<comment type="subcellular location">
    <subcellularLocation>
        <location evidence="4">Cell membrane</location>
        <topology evidence="4">Multi-pass membrane protein</topology>
    </subcellularLocation>
</comment>
<comment type="domain">
    <text evidence="1">The binding of calmodulin to the C-terminus might interfere with cyclic nucleotide binding and thus channel activation.</text>
</comment>
<comment type="similarity">
    <text evidence="4">Belongs to the cyclic nucleotide-gated cation channel (TC 1.A.1.5) family.</text>
</comment>
<dbReference type="EMBL" id="Y17914">
    <property type="protein sequence ID" value="CAB40131.1"/>
    <property type="molecule type" value="mRNA"/>
</dbReference>
<dbReference type="EMBL" id="AC005170">
    <property type="protein sequence ID" value="AAC63666.2"/>
    <property type="molecule type" value="Genomic_DNA"/>
</dbReference>
<dbReference type="EMBL" id="CP002685">
    <property type="protein sequence ID" value="AEC07510.1"/>
    <property type="molecule type" value="Genomic_DNA"/>
</dbReference>
<dbReference type="EMBL" id="CP002685">
    <property type="protein sequence ID" value="ANM61675.1"/>
    <property type="molecule type" value="Genomic_DNA"/>
</dbReference>
<dbReference type="EMBL" id="CP002685">
    <property type="protein sequence ID" value="ANM61676.1"/>
    <property type="molecule type" value="Genomic_DNA"/>
</dbReference>
<dbReference type="EMBL" id="CP002685">
    <property type="protein sequence ID" value="ANM61680.1"/>
    <property type="molecule type" value="Genomic_DNA"/>
</dbReference>
<dbReference type="EMBL" id="CP002685">
    <property type="protein sequence ID" value="ANM61682.1"/>
    <property type="molecule type" value="Genomic_DNA"/>
</dbReference>
<dbReference type="PIR" id="B84631">
    <property type="entry name" value="B84631"/>
</dbReference>
<dbReference type="PIR" id="T52572">
    <property type="entry name" value="T52572"/>
</dbReference>
<dbReference type="RefSeq" id="NP_001318278.1">
    <property type="nucleotide sequence ID" value="NM_001335878.1"/>
</dbReference>
<dbReference type="RefSeq" id="NP_001323879.1">
    <property type="nucleotide sequence ID" value="NM_001335882.1"/>
</dbReference>
<dbReference type="RefSeq" id="NP_001323883.1">
    <property type="nucleotide sequence ID" value="NM_001335886.1"/>
</dbReference>
<dbReference type="RefSeq" id="NP_001323885.1">
    <property type="nucleotide sequence ID" value="NM_001335881.1"/>
</dbReference>
<dbReference type="RefSeq" id="NP_565560.1">
    <property type="nucleotide sequence ID" value="NM_127960.3"/>
</dbReference>
<dbReference type="PDB" id="1WGP">
    <property type="method" value="NMR"/>
    <property type="chains" value="A=509-632"/>
</dbReference>
<dbReference type="PDBsum" id="1WGP"/>
<dbReference type="SMR" id="O82226"/>
<dbReference type="BioGRID" id="2283">
    <property type="interactions" value="17"/>
</dbReference>
<dbReference type="FunCoup" id="O82226">
    <property type="interactions" value="609"/>
</dbReference>
<dbReference type="IntAct" id="O82226">
    <property type="interactions" value="16"/>
</dbReference>
<dbReference type="STRING" id="3702.O82226"/>
<dbReference type="TCDB" id="1.A.1.5.14">
    <property type="family name" value="the voltage-gated ion channel (vic) superfamily"/>
</dbReference>
<dbReference type="iPTMnet" id="O82226"/>
<dbReference type="PaxDb" id="3702-AT2G23980.1"/>
<dbReference type="ProteomicsDB" id="241243"/>
<dbReference type="EnsemblPlants" id="AT2G23980.1">
    <property type="protein sequence ID" value="AT2G23980.1"/>
    <property type="gene ID" value="AT2G23980"/>
</dbReference>
<dbReference type="EnsemblPlants" id="AT2G23980.10">
    <property type="protein sequence ID" value="AT2G23980.10"/>
    <property type="gene ID" value="AT2G23980"/>
</dbReference>
<dbReference type="EnsemblPlants" id="AT2G23980.4">
    <property type="protein sequence ID" value="AT2G23980.4"/>
    <property type="gene ID" value="AT2G23980"/>
</dbReference>
<dbReference type="EnsemblPlants" id="AT2G23980.5">
    <property type="protein sequence ID" value="AT2G23980.5"/>
    <property type="gene ID" value="AT2G23980"/>
</dbReference>
<dbReference type="EnsemblPlants" id="AT2G23980.9">
    <property type="protein sequence ID" value="AT2G23980.9"/>
    <property type="gene ID" value="AT2G23980"/>
</dbReference>
<dbReference type="GeneID" id="816931"/>
<dbReference type="Gramene" id="AT2G23980.1">
    <property type="protein sequence ID" value="AT2G23980.1"/>
    <property type="gene ID" value="AT2G23980"/>
</dbReference>
<dbReference type="Gramene" id="AT2G23980.10">
    <property type="protein sequence ID" value="AT2G23980.10"/>
    <property type="gene ID" value="AT2G23980"/>
</dbReference>
<dbReference type="Gramene" id="AT2G23980.4">
    <property type="protein sequence ID" value="AT2G23980.4"/>
    <property type="gene ID" value="AT2G23980"/>
</dbReference>
<dbReference type="Gramene" id="AT2G23980.5">
    <property type="protein sequence ID" value="AT2G23980.5"/>
    <property type="gene ID" value="AT2G23980"/>
</dbReference>
<dbReference type="Gramene" id="AT2G23980.9">
    <property type="protein sequence ID" value="AT2G23980.9"/>
    <property type="gene ID" value="AT2G23980"/>
</dbReference>
<dbReference type="KEGG" id="ath:AT2G23980"/>
<dbReference type="Araport" id="AT2G23980"/>
<dbReference type="TAIR" id="AT2G23980">
    <property type="gene designation" value="CNGC6"/>
</dbReference>
<dbReference type="eggNOG" id="KOG0498">
    <property type="taxonomic scope" value="Eukaryota"/>
</dbReference>
<dbReference type="HOGENOM" id="CLU_013069_3_0_1"/>
<dbReference type="InParanoid" id="O82226"/>
<dbReference type="PhylomeDB" id="O82226"/>
<dbReference type="EvolutionaryTrace" id="O82226"/>
<dbReference type="PRO" id="PR:O82226"/>
<dbReference type="Proteomes" id="UP000006548">
    <property type="component" value="Chromosome 2"/>
</dbReference>
<dbReference type="ExpressionAtlas" id="O82226">
    <property type="expression patterns" value="baseline and differential"/>
</dbReference>
<dbReference type="GO" id="GO:0071944">
    <property type="term" value="C:cell periphery"/>
    <property type="evidence" value="ECO:0000314"/>
    <property type="project" value="TAIR"/>
</dbReference>
<dbReference type="GO" id="GO:0005886">
    <property type="term" value="C:plasma membrane"/>
    <property type="evidence" value="ECO:0000314"/>
    <property type="project" value="TAIR"/>
</dbReference>
<dbReference type="GO" id="GO:0035618">
    <property type="term" value="C:root hair"/>
    <property type="evidence" value="ECO:0000314"/>
    <property type="project" value="TAIR"/>
</dbReference>
<dbReference type="GO" id="GO:0005262">
    <property type="term" value="F:calcium channel activity"/>
    <property type="evidence" value="ECO:0000314"/>
    <property type="project" value="TAIR"/>
</dbReference>
<dbReference type="GO" id="GO:0005516">
    <property type="term" value="F:calmodulin binding"/>
    <property type="evidence" value="ECO:0007669"/>
    <property type="project" value="UniProtKB-KW"/>
</dbReference>
<dbReference type="GO" id="GO:0030552">
    <property type="term" value="F:cAMP binding"/>
    <property type="evidence" value="ECO:0007669"/>
    <property type="project" value="UniProtKB-KW"/>
</dbReference>
<dbReference type="GO" id="GO:0030553">
    <property type="term" value="F:cGMP binding"/>
    <property type="evidence" value="ECO:0007669"/>
    <property type="project" value="UniProtKB-KW"/>
</dbReference>
<dbReference type="GO" id="GO:0005223">
    <property type="term" value="F:intracellularly cGMP-activated cation channel activity"/>
    <property type="evidence" value="ECO:0000314"/>
    <property type="project" value="TAIR"/>
</dbReference>
<dbReference type="GO" id="GO:0005249">
    <property type="term" value="F:voltage-gated potassium channel activity"/>
    <property type="evidence" value="ECO:0007669"/>
    <property type="project" value="InterPro"/>
</dbReference>
<dbReference type="GO" id="GO:0009408">
    <property type="term" value="P:response to heat"/>
    <property type="evidence" value="ECO:0000314"/>
    <property type="project" value="TAIR"/>
</dbReference>
<dbReference type="CDD" id="cd00038">
    <property type="entry name" value="CAP_ED"/>
    <property type="match status" value="1"/>
</dbReference>
<dbReference type="FunFam" id="1.10.287.630:FF:000003">
    <property type="entry name" value="Cyclic nucleotide-gated ion channel 1"/>
    <property type="match status" value="1"/>
</dbReference>
<dbReference type="FunFam" id="2.60.120.10:FF:000024">
    <property type="entry name" value="Cyclic nucleotide-gated ion channel 1"/>
    <property type="match status" value="1"/>
</dbReference>
<dbReference type="Gene3D" id="1.10.287.70">
    <property type="match status" value="1"/>
</dbReference>
<dbReference type="Gene3D" id="1.10.287.630">
    <property type="entry name" value="Helix hairpin bin"/>
    <property type="match status" value="1"/>
</dbReference>
<dbReference type="Gene3D" id="2.60.120.10">
    <property type="entry name" value="Jelly Rolls"/>
    <property type="match status" value="1"/>
</dbReference>
<dbReference type="InterPro" id="IPR000595">
    <property type="entry name" value="cNMP-bd_dom"/>
</dbReference>
<dbReference type="InterPro" id="IPR018490">
    <property type="entry name" value="cNMP-bd_dom_sf"/>
</dbReference>
<dbReference type="InterPro" id="IPR005821">
    <property type="entry name" value="Ion_trans_dom"/>
</dbReference>
<dbReference type="InterPro" id="IPR003938">
    <property type="entry name" value="K_chnl_volt-dep_EAG/ELK/ERG"/>
</dbReference>
<dbReference type="InterPro" id="IPR014710">
    <property type="entry name" value="RmlC-like_jellyroll"/>
</dbReference>
<dbReference type="PANTHER" id="PTHR45651">
    <property type="entry name" value="CYCLIC NUCLEOTIDE-GATED ION CHANNEL 15-RELATED-RELATED"/>
    <property type="match status" value="1"/>
</dbReference>
<dbReference type="PANTHER" id="PTHR45651:SF42">
    <property type="entry name" value="CYCLIC NUCLEOTIDE-GATED ION CHANNEL 6-RELATED"/>
    <property type="match status" value="1"/>
</dbReference>
<dbReference type="Pfam" id="PF00520">
    <property type="entry name" value="Ion_trans"/>
    <property type="match status" value="1"/>
</dbReference>
<dbReference type="PRINTS" id="PR01463">
    <property type="entry name" value="EAGCHANLFMLY"/>
</dbReference>
<dbReference type="SMART" id="SM00100">
    <property type="entry name" value="cNMP"/>
    <property type="match status" value="1"/>
</dbReference>
<dbReference type="SUPFAM" id="SSF51206">
    <property type="entry name" value="cAMP-binding domain-like"/>
    <property type="match status" value="1"/>
</dbReference>
<dbReference type="SUPFAM" id="SSF81324">
    <property type="entry name" value="Voltage-gated potassium channels"/>
    <property type="match status" value="1"/>
</dbReference>
<dbReference type="PROSITE" id="PS50042">
    <property type="entry name" value="CNMP_BINDING_3"/>
    <property type="match status" value="1"/>
</dbReference>
<dbReference type="PROSITE" id="PS50096">
    <property type="entry name" value="IQ"/>
    <property type="match status" value="1"/>
</dbReference>
<gene>
    <name type="primary">CNGC6</name>
    <name type="ordered locus">At2g23980</name>
    <name type="ORF">T29E15.18</name>
</gene>
<reference key="1">
    <citation type="journal article" date="1999" name="Plant J.">
        <title>Characterisation of a novel gene family of putative cyclic nucleotide- and calmodulin-regulated ion channels in Arabidopsis thaliana.</title>
        <authorList>
            <person name="Koehler C."/>
            <person name="Merkle T."/>
            <person name="Neuhaus G."/>
        </authorList>
    </citation>
    <scope>NUCLEOTIDE SEQUENCE [MRNA]</scope>
    <source>
        <strain>cv. Columbia</strain>
    </source>
</reference>
<reference key="2">
    <citation type="journal article" date="1999" name="Nature">
        <title>Sequence and analysis of chromosome 2 of the plant Arabidopsis thaliana.</title>
        <authorList>
            <person name="Lin X."/>
            <person name="Kaul S."/>
            <person name="Rounsley S.D."/>
            <person name="Shea T.P."/>
            <person name="Benito M.-I."/>
            <person name="Town C.D."/>
            <person name="Fujii C.Y."/>
            <person name="Mason T.M."/>
            <person name="Bowman C.L."/>
            <person name="Barnstead M.E."/>
            <person name="Feldblyum T.V."/>
            <person name="Buell C.R."/>
            <person name="Ketchum K.A."/>
            <person name="Lee J.J."/>
            <person name="Ronning C.M."/>
            <person name="Koo H.L."/>
            <person name="Moffat K.S."/>
            <person name="Cronin L.A."/>
            <person name="Shen M."/>
            <person name="Pai G."/>
            <person name="Van Aken S."/>
            <person name="Umayam L."/>
            <person name="Tallon L.J."/>
            <person name="Gill J.E."/>
            <person name="Adams M.D."/>
            <person name="Carrera A.J."/>
            <person name="Creasy T.H."/>
            <person name="Goodman H.M."/>
            <person name="Somerville C.R."/>
            <person name="Copenhaver G.P."/>
            <person name="Preuss D."/>
            <person name="Nierman W.C."/>
            <person name="White O."/>
            <person name="Eisen J.A."/>
            <person name="Salzberg S.L."/>
            <person name="Fraser C.M."/>
            <person name="Venter J.C."/>
        </authorList>
    </citation>
    <scope>NUCLEOTIDE SEQUENCE [LARGE SCALE GENOMIC DNA]</scope>
    <source>
        <strain>cv. Columbia</strain>
    </source>
</reference>
<reference key="3">
    <citation type="journal article" date="2017" name="Plant J.">
        <title>Araport11: a complete reannotation of the Arabidopsis thaliana reference genome.</title>
        <authorList>
            <person name="Cheng C.Y."/>
            <person name="Krishnakumar V."/>
            <person name="Chan A.P."/>
            <person name="Thibaud-Nissen F."/>
            <person name="Schobel S."/>
            <person name="Town C.D."/>
        </authorList>
    </citation>
    <scope>GENOME REANNOTATION</scope>
    <source>
        <strain>cv. Columbia</strain>
    </source>
</reference>
<reference key="4">
    <citation type="journal article" date="2001" name="Plant Physiol.">
        <title>Phylogenetic relationships within cation transporter families of Arabidopsis.</title>
        <authorList>
            <person name="Maeser P."/>
            <person name="Thomine S."/>
            <person name="Schroeder J.I."/>
            <person name="Ward J.M."/>
            <person name="Hirschi K."/>
            <person name="Sze H."/>
            <person name="Talke I.N."/>
            <person name="Amtmann A."/>
            <person name="Maathuis F.J.M."/>
            <person name="Sanders D."/>
            <person name="Harper J.F."/>
            <person name="Tchieu J."/>
            <person name="Gribskov M."/>
            <person name="Persans M.W."/>
            <person name="Salt D.E."/>
            <person name="Kim S.A."/>
            <person name="Guerinot M.L."/>
        </authorList>
    </citation>
    <scope>GENE FAMILY</scope>
    <scope>NOMENCLATURE</scope>
</reference>
<reference key="5">
    <citation type="submission" date="2004-11" db="PDB data bank">
        <title>Solution structure of the cnmp-binding domain from Arabidopsis thaliana cyclic nucleotide-regulated ion channel.</title>
        <authorList>
            <consortium name="RIKEN structural genomics initiative (RSGI)"/>
        </authorList>
    </citation>
    <scope>STRUCTURE BY NMR OF 509-632</scope>
</reference>
<keyword id="KW-0002">3D-structure</keyword>
<keyword id="KW-0112">Calmodulin-binding</keyword>
<keyword id="KW-0114">cAMP</keyword>
<keyword id="KW-0116">cAMP-binding</keyword>
<keyword id="KW-1003">Cell membrane</keyword>
<keyword id="KW-0140">cGMP</keyword>
<keyword id="KW-0142">cGMP-binding</keyword>
<keyword id="KW-0407">Ion channel</keyword>
<keyword id="KW-0406">Ion transport</keyword>
<keyword id="KW-1071">Ligand-gated ion channel</keyword>
<keyword id="KW-0472">Membrane</keyword>
<keyword id="KW-0547">Nucleotide-binding</keyword>
<keyword id="KW-1185">Reference proteome</keyword>
<keyword id="KW-0812">Transmembrane</keyword>
<keyword id="KW-1133">Transmembrane helix</keyword>
<keyword id="KW-0813">Transport</keyword>
<sequence length="747" mass="85441">MFDTCGPKGVKSQVISGQRENFVRLDSMDSRYSQSSETGLNKCTLNIQGGPKRFAQGSKASSGSFKKGFRKGSEGLWSIGRSIGLGVSRAVFPEDLEVSEKKIFDPQDKFLLLCNKLFVASCILAVSVDPLFLYLPFINDKAKCVGIDRKLAIIVTTIRTVIDSFYLFHMALRFRTAYVAPSSRVFGRGELVIDPAQIAKRYLQQYFIIDLLSVLPVPQIIVWRFLYTSRGANVLATKQALRYIVLVQYIPRFLRMYPLSSELKRTAGVFAETAWAGAAYYLLLYMLASHIVGALWYLLALERNNDCWSKACHNNQNCTRNFLFCGNQNMKGYAAWDNIKVSYLQLKCPVNVPEDEEPPFDFGIYLRALSSGIVSSKNFVSKYFFCLWWGLQNLSTLGQGLETSTYPGEVIFSITLAIAGLLLFALLIGNMQTYLQSLTIRLEEMRVKRRDSEQWMHHRMLPPELRERVRRYDQYKWLETRGVDEENLVQNLPKDLRRDIKRHLCLALVRRVPLFENMDERLLDAICERLKPCLFTEKSYLVREGDPVNEMLFIIRGRLESVTTDGGRSGFYNRSLLKEGDFCGDELLTWALDPKSGSNLPSSTRTVKALTEVEAFALIADELKFVASQFRRLHSRQVQHTFRFYSQQWRTWAACFMQAAWRRYIKRKKLEQLRKEEEEEEAAAASVIAGGSPYSIRATFLASKFAANALRSVHKNRTAKSTLLLSSTKELVKFQKPPEPDFSAEDH</sequence>
<evidence type="ECO:0000250" key="1"/>
<evidence type="ECO:0000255" key="2"/>
<evidence type="ECO:0000255" key="3">
    <source>
        <dbReference type="PROSITE-ProRule" id="PRU00116"/>
    </source>
</evidence>
<evidence type="ECO:0000305" key="4"/>
<evidence type="ECO:0007829" key="5">
    <source>
        <dbReference type="PDB" id="1WGP"/>
    </source>
</evidence>